<keyword id="KW-0067">ATP-binding</keyword>
<keyword id="KW-0997">Cell inner membrane</keyword>
<keyword id="KW-1003">Cell membrane</keyword>
<keyword id="KW-0963">Cytoplasm</keyword>
<keyword id="KW-0472">Membrane</keyword>
<keyword id="KW-0547">Nucleotide-binding</keyword>
<keyword id="KW-0653">Protein transport</keyword>
<keyword id="KW-1278">Translocase</keyword>
<keyword id="KW-0811">Translocation</keyword>
<keyword id="KW-0813">Transport</keyword>
<gene>
    <name evidence="1" type="primary">secA2</name>
    <name type="ordered locus">Cag_1563</name>
</gene>
<accession>Q3AQA7</accession>
<name>SECA2_CHLCH</name>
<organism>
    <name type="scientific">Chlorobium chlorochromatii (strain CaD3)</name>
    <dbReference type="NCBI Taxonomy" id="340177"/>
    <lineage>
        <taxon>Bacteria</taxon>
        <taxon>Pseudomonadati</taxon>
        <taxon>Chlorobiota</taxon>
        <taxon>Chlorobiia</taxon>
        <taxon>Chlorobiales</taxon>
        <taxon>Chlorobiaceae</taxon>
        <taxon>Chlorobium/Pelodictyon group</taxon>
        <taxon>Chlorobium</taxon>
    </lineage>
</organism>
<dbReference type="EC" id="7.4.2.8" evidence="1"/>
<dbReference type="EMBL" id="CP000108">
    <property type="protein sequence ID" value="ABB28818.1"/>
    <property type="molecule type" value="Genomic_DNA"/>
</dbReference>
<dbReference type="SMR" id="Q3AQA7"/>
<dbReference type="STRING" id="340177.Cag_1563"/>
<dbReference type="KEGG" id="cch:Cag_1563"/>
<dbReference type="eggNOG" id="COG0653">
    <property type="taxonomic scope" value="Bacteria"/>
</dbReference>
<dbReference type="HOGENOM" id="CLU_005314_3_2_10"/>
<dbReference type="OrthoDB" id="9805579at2"/>
<dbReference type="GO" id="GO:0031522">
    <property type="term" value="C:cell envelope Sec protein transport complex"/>
    <property type="evidence" value="ECO:0007669"/>
    <property type="project" value="TreeGrafter"/>
</dbReference>
<dbReference type="GO" id="GO:0005829">
    <property type="term" value="C:cytosol"/>
    <property type="evidence" value="ECO:0007669"/>
    <property type="project" value="TreeGrafter"/>
</dbReference>
<dbReference type="GO" id="GO:0005886">
    <property type="term" value="C:plasma membrane"/>
    <property type="evidence" value="ECO:0007669"/>
    <property type="project" value="UniProtKB-SubCell"/>
</dbReference>
<dbReference type="GO" id="GO:0005524">
    <property type="term" value="F:ATP binding"/>
    <property type="evidence" value="ECO:0007669"/>
    <property type="project" value="UniProtKB-UniRule"/>
</dbReference>
<dbReference type="GO" id="GO:0008564">
    <property type="term" value="F:protein-exporting ATPase activity"/>
    <property type="evidence" value="ECO:0007669"/>
    <property type="project" value="UniProtKB-EC"/>
</dbReference>
<dbReference type="GO" id="GO:0065002">
    <property type="term" value="P:intracellular protein transmembrane transport"/>
    <property type="evidence" value="ECO:0007669"/>
    <property type="project" value="UniProtKB-UniRule"/>
</dbReference>
<dbReference type="GO" id="GO:0017038">
    <property type="term" value="P:protein import"/>
    <property type="evidence" value="ECO:0007669"/>
    <property type="project" value="InterPro"/>
</dbReference>
<dbReference type="GO" id="GO:0006605">
    <property type="term" value="P:protein targeting"/>
    <property type="evidence" value="ECO:0007669"/>
    <property type="project" value="UniProtKB-UniRule"/>
</dbReference>
<dbReference type="GO" id="GO:0043952">
    <property type="term" value="P:protein transport by the Sec complex"/>
    <property type="evidence" value="ECO:0007669"/>
    <property type="project" value="TreeGrafter"/>
</dbReference>
<dbReference type="CDD" id="cd17928">
    <property type="entry name" value="DEXDc_SecA"/>
    <property type="match status" value="1"/>
</dbReference>
<dbReference type="CDD" id="cd18803">
    <property type="entry name" value="SF2_C_secA"/>
    <property type="match status" value="1"/>
</dbReference>
<dbReference type="FunFam" id="3.40.50.300:FF:000429">
    <property type="entry name" value="Preprotein translocase subunit SecA"/>
    <property type="match status" value="1"/>
</dbReference>
<dbReference type="Gene3D" id="3.40.50.300">
    <property type="entry name" value="P-loop containing nucleotide triphosphate hydrolases"/>
    <property type="match status" value="2"/>
</dbReference>
<dbReference type="Gene3D" id="3.90.1440.10">
    <property type="entry name" value="SecA, preprotein cross-linking domain"/>
    <property type="match status" value="1"/>
</dbReference>
<dbReference type="HAMAP" id="MF_01382">
    <property type="entry name" value="SecA"/>
    <property type="match status" value="1"/>
</dbReference>
<dbReference type="InterPro" id="IPR014001">
    <property type="entry name" value="Helicase_ATP-bd"/>
</dbReference>
<dbReference type="InterPro" id="IPR001650">
    <property type="entry name" value="Helicase_C-like"/>
</dbReference>
<dbReference type="InterPro" id="IPR027417">
    <property type="entry name" value="P-loop_NTPase"/>
</dbReference>
<dbReference type="InterPro" id="IPR000185">
    <property type="entry name" value="SecA"/>
</dbReference>
<dbReference type="InterPro" id="IPR020937">
    <property type="entry name" value="SecA_CS"/>
</dbReference>
<dbReference type="InterPro" id="IPR011115">
    <property type="entry name" value="SecA_DEAD"/>
</dbReference>
<dbReference type="InterPro" id="IPR014018">
    <property type="entry name" value="SecA_motor_DEAD"/>
</dbReference>
<dbReference type="InterPro" id="IPR011130">
    <property type="entry name" value="SecA_preprotein_X-link_dom"/>
</dbReference>
<dbReference type="InterPro" id="IPR044722">
    <property type="entry name" value="SecA_SF2_C"/>
</dbReference>
<dbReference type="InterPro" id="IPR036670">
    <property type="entry name" value="SecA_X-link_sf"/>
</dbReference>
<dbReference type="PANTHER" id="PTHR30612:SF0">
    <property type="entry name" value="CHLOROPLAST PROTEIN-TRANSPORTING ATPASE"/>
    <property type="match status" value="1"/>
</dbReference>
<dbReference type="PANTHER" id="PTHR30612">
    <property type="entry name" value="SECA INNER MEMBRANE COMPONENT OF SEC PROTEIN SECRETION SYSTEM"/>
    <property type="match status" value="1"/>
</dbReference>
<dbReference type="Pfam" id="PF21090">
    <property type="entry name" value="P-loop_SecA"/>
    <property type="match status" value="2"/>
</dbReference>
<dbReference type="Pfam" id="PF07517">
    <property type="entry name" value="SecA_DEAD"/>
    <property type="match status" value="1"/>
</dbReference>
<dbReference type="Pfam" id="PF01043">
    <property type="entry name" value="SecA_PP_bind"/>
    <property type="match status" value="1"/>
</dbReference>
<dbReference type="PRINTS" id="PR00906">
    <property type="entry name" value="SECA"/>
</dbReference>
<dbReference type="SMART" id="SM00957">
    <property type="entry name" value="SecA_DEAD"/>
    <property type="match status" value="1"/>
</dbReference>
<dbReference type="SMART" id="SM00958">
    <property type="entry name" value="SecA_PP_bind"/>
    <property type="match status" value="1"/>
</dbReference>
<dbReference type="SUPFAM" id="SSF52540">
    <property type="entry name" value="P-loop containing nucleoside triphosphate hydrolases"/>
    <property type="match status" value="2"/>
</dbReference>
<dbReference type="SUPFAM" id="SSF81767">
    <property type="entry name" value="Pre-protein crosslinking domain of SecA"/>
    <property type="match status" value="1"/>
</dbReference>
<dbReference type="PROSITE" id="PS01312">
    <property type="entry name" value="SECA"/>
    <property type="match status" value="1"/>
</dbReference>
<dbReference type="PROSITE" id="PS51196">
    <property type="entry name" value="SECA_MOTOR_DEAD"/>
    <property type="match status" value="1"/>
</dbReference>
<proteinExistence type="inferred from homology"/>
<comment type="function">
    <text evidence="1">Part of the Sec protein translocase complex. Interacts with the SecYEG preprotein conducting channel. Has a central role in coupling the hydrolysis of ATP to the transfer of proteins into and across the cell membrane, serving as an ATP-driven molecular motor driving the stepwise translocation of polypeptide chains across the membrane.</text>
</comment>
<comment type="catalytic activity">
    <reaction evidence="1">
        <text>ATP + H2O + cellular proteinSide 1 = ADP + phosphate + cellular proteinSide 2.</text>
        <dbReference type="EC" id="7.4.2.8"/>
    </reaction>
</comment>
<comment type="subunit">
    <text evidence="1">Monomer and homodimer. Part of the essential Sec protein translocation apparatus which comprises SecA, SecYEG and auxiliary proteins SecDF. Other proteins may also be involved.</text>
</comment>
<comment type="subcellular location">
    <subcellularLocation>
        <location evidence="1">Cell inner membrane</location>
        <topology evidence="1">Peripheral membrane protein</topology>
        <orientation evidence="1">Cytoplasmic side</orientation>
    </subcellularLocation>
    <subcellularLocation>
        <location evidence="1">Cytoplasm</location>
    </subcellularLocation>
    <text evidence="1">Distribution is 50-50.</text>
</comment>
<comment type="similarity">
    <text evidence="1">Belongs to the SecA family.</text>
</comment>
<protein>
    <recommendedName>
        <fullName evidence="1">Protein translocase subunit SecA 2</fullName>
        <ecNumber evidence="1">7.4.2.8</ecNumber>
    </recommendedName>
</protein>
<sequence>MIPSQEYRKSVVHQPENVPSGFRGATHWLAGKVHRRQSKQQALLEQAHTIHTAAEAHRTLSLVDLQAQLLSFRDHFRRRARGYEQHISAAMALIVEASHRQLGLRPFPVQIMGALALLEGSLIEMQTGEGKTLVAALAAVFLGWSGRSCHVITVNDYLASRDYARLEPLYTFCGVTASCVIGELKRPERQRSYQAAVVYVTSKELVADFLKDRLLLHGVSDPSRHFLHSSNTLREGDEVPVLNGLWAAIVDEADSVLVDDAATPLIISRPVKNEPLMEACREAVRLAAKLQPTLHYTVEERYKQIALTSEGNATIEQMLPTLPPFWHSATRRNELLLLVLNAREFFRKGKDYVVSDGKVVIIDEFTGRLMPDRKWQKGTQQIVELLEGVEPTDPVEVAARISFQRFFRFYKLLCGMSGTVKGVTAELWHIYSLPYVAIPTNKPSRRTTQAPEYFLEKGAKYAALIATLEALHRQGVPILVGTRSVRESEFLADLLRQKMLNFQLLNAIYHKEEAAIIARAGERGNITIATNMAGRGTDILLEQGVAALGGLHVLLAEPNEAERIDRQFYGRCARQGDPGTSYSYIALDDRLLQRFFPERFLNSVMAEVLLRRLPGSHALMQLLVYLAQQMAQRMAYQQRLSLLRRDEQLDQLMSFAGSGPKF</sequence>
<feature type="chain" id="PRO_0000318333" description="Protein translocase subunit SecA 2">
    <location>
        <begin position="1"/>
        <end position="662"/>
    </location>
</feature>
<feature type="binding site" evidence="1">
    <location>
        <position position="110"/>
    </location>
    <ligand>
        <name>ATP</name>
        <dbReference type="ChEBI" id="CHEBI:30616"/>
    </ligand>
</feature>
<feature type="binding site" evidence="1">
    <location>
        <begin position="128"/>
        <end position="132"/>
    </location>
    <ligand>
        <name>ATP</name>
        <dbReference type="ChEBI" id="CHEBI:30616"/>
    </ligand>
</feature>
<feature type="binding site" evidence="1">
    <location>
        <position position="538"/>
    </location>
    <ligand>
        <name>ATP</name>
        <dbReference type="ChEBI" id="CHEBI:30616"/>
    </ligand>
</feature>
<reference key="1">
    <citation type="submission" date="2005-08" db="EMBL/GenBank/DDBJ databases">
        <title>Complete sequence of Chlorobium chlorochromatii CaD3.</title>
        <authorList>
            <consortium name="US DOE Joint Genome Institute"/>
            <person name="Copeland A."/>
            <person name="Lucas S."/>
            <person name="Lapidus A."/>
            <person name="Barry K."/>
            <person name="Detter J.C."/>
            <person name="Glavina T."/>
            <person name="Hammon N."/>
            <person name="Israni S."/>
            <person name="Pitluck S."/>
            <person name="Bryant D."/>
            <person name="Schmutz J."/>
            <person name="Larimer F."/>
            <person name="Land M."/>
            <person name="Kyrpides N."/>
            <person name="Ivanova N."/>
            <person name="Richardson P."/>
        </authorList>
    </citation>
    <scope>NUCLEOTIDE SEQUENCE [LARGE SCALE GENOMIC DNA]</scope>
    <source>
        <strain>CaD3</strain>
    </source>
</reference>
<evidence type="ECO:0000255" key="1">
    <source>
        <dbReference type="HAMAP-Rule" id="MF_01382"/>
    </source>
</evidence>